<protein>
    <recommendedName>
        <fullName>Histone acetyltransferase type B subunit 2</fullName>
    </recommendedName>
</protein>
<dbReference type="EMBL" id="AAEY01000038">
    <property type="protein sequence ID" value="EAL19568.1"/>
    <property type="molecule type" value="Genomic_DNA"/>
</dbReference>
<dbReference type="RefSeq" id="XP_774215.1">
    <property type="nucleotide sequence ID" value="XM_769122.1"/>
</dbReference>
<dbReference type="SMR" id="P0CS37"/>
<dbReference type="EnsemblFungi" id="AAW44637">
    <property type="protein sequence ID" value="AAW44637"/>
    <property type="gene ID" value="CNG02800"/>
</dbReference>
<dbReference type="GeneID" id="4937231"/>
<dbReference type="KEGG" id="cnb:CNBG1970"/>
<dbReference type="VEuPathDB" id="FungiDB:CNBG1970"/>
<dbReference type="HOGENOM" id="CLU_020445_3_1_1"/>
<dbReference type="OrthoDB" id="539at5206"/>
<dbReference type="GO" id="GO:0005737">
    <property type="term" value="C:cytoplasm"/>
    <property type="evidence" value="ECO:0007669"/>
    <property type="project" value="UniProtKB-SubCell"/>
</dbReference>
<dbReference type="GO" id="GO:0005634">
    <property type="term" value="C:nucleus"/>
    <property type="evidence" value="ECO:0007669"/>
    <property type="project" value="UniProtKB-SubCell"/>
</dbReference>
<dbReference type="GO" id="GO:0006325">
    <property type="term" value="P:chromatin organization"/>
    <property type="evidence" value="ECO:0007669"/>
    <property type="project" value="UniProtKB-KW"/>
</dbReference>
<dbReference type="Gene3D" id="2.130.10.10">
    <property type="entry name" value="YVTN repeat-like/Quinoprotein amine dehydrogenase"/>
    <property type="match status" value="1"/>
</dbReference>
<dbReference type="InterPro" id="IPR020472">
    <property type="entry name" value="G-protein_beta_WD-40_rep"/>
</dbReference>
<dbReference type="InterPro" id="IPR022052">
    <property type="entry name" value="Histone-bd_RBBP4-like_N"/>
</dbReference>
<dbReference type="InterPro" id="IPR015943">
    <property type="entry name" value="WD40/YVTN_repeat-like_dom_sf"/>
</dbReference>
<dbReference type="InterPro" id="IPR036322">
    <property type="entry name" value="WD40_repeat_dom_sf"/>
</dbReference>
<dbReference type="InterPro" id="IPR001680">
    <property type="entry name" value="WD40_rpt"/>
</dbReference>
<dbReference type="InterPro" id="IPR050459">
    <property type="entry name" value="WD_repeat_RBAP46/RBAP48/MSI1"/>
</dbReference>
<dbReference type="PANTHER" id="PTHR22850">
    <property type="entry name" value="WD40 REPEAT FAMILY"/>
    <property type="match status" value="1"/>
</dbReference>
<dbReference type="Pfam" id="PF12265">
    <property type="entry name" value="CAF1C_H4-bd"/>
    <property type="match status" value="1"/>
</dbReference>
<dbReference type="Pfam" id="PF00400">
    <property type="entry name" value="WD40"/>
    <property type="match status" value="4"/>
</dbReference>
<dbReference type="PRINTS" id="PR00320">
    <property type="entry name" value="GPROTEINBRPT"/>
</dbReference>
<dbReference type="SMART" id="SM00320">
    <property type="entry name" value="WD40"/>
    <property type="match status" value="6"/>
</dbReference>
<dbReference type="SUPFAM" id="SSF50978">
    <property type="entry name" value="WD40 repeat-like"/>
    <property type="match status" value="1"/>
</dbReference>
<dbReference type="PROSITE" id="PS50082">
    <property type="entry name" value="WD_REPEATS_2"/>
    <property type="match status" value="4"/>
</dbReference>
<dbReference type="PROSITE" id="PS50294">
    <property type="entry name" value="WD_REPEATS_REGION"/>
    <property type="match status" value="1"/>
</dbReference>
<gene>
    <name type="primary">HAT2</name>
    <name type="ordered locus">CNBG1970</name>
</gene>
<name>HAT2_CRYNB</name>
<sequence>MAHNEPITIDDAGDDFDAVEDNQAINEQYKVWKKNTPFLYDTVITHALTWPSLTCQWLPDITDVPDTDYTSQRLIIGTHTSGQANDHLIIAEVLLPKKGAGISDKALADLYDEEKQEIGSYTASPARIRAIQTINHAGEVNRARYMPQNPELIATKTVTGEVYVFDRTKHESKAPANGECKPDIRLKGQTKEGYGLSWNALKEGHILSASEDTTIGHWDIQGYSKQDPSLQPLRLYTGHSAYVADVEWHPKNENMFGSVSDDGQIMIWDTRSDNTAKASSQVQGHNAEINCISFAPSSEYLFLTGSSDNTIALWDLRKLSTKHHSFEAHTNDVLQLSWSPTSPVHFASASADRRVHIWDLDAIGAEQTPDDAEDGPPELLFVHGGHTSKVCDISWSPSSPWTIASASEDNILQVWEPSRHLRTPYEAEFDEKDLE</sequence>
<accession>P0CS37</accession>
<accession>Q55PL6</accession>
<accession>Q5KDT9</accession>
<reference key="1">
    <citation type="journal article" date="2005" name="Science">
        <title>The genome of the basidiomycetous yeast and human pathogen Cryptococcus neoformans.</title>
        <authorList>
            <person name="Loftus B.J."/>
            <person name="Fung E."/>
            <person name="Roncaglia P."/>
            <person name="Rowley D."/>
            <person name="Amedeo P."/>
            <person name="Bruno D."/>
            <person name="Vamathevan J."/>
            <person name="Miranda M."/>
            <person name="Anderson I.J."/>
            <person name="Fraser J.A."/>
            <person name="Allen J.E."/>
            <person name="Bosdet I.E."/>
            <person name="Brent M.R."/>
            <person name="Chiu R."/>
            <person name="Doering T.L."/>
            <person name="Donlin M.J."/>
            <person name="D'Souza C.A."/>
            <person name="Fox D.S."/>
            <person name="Grinberg V."/>
            <person name="Fu J."/>
            <person name="Fukushima M."/>
            <person name="Haas B.J."/>
            <person name="Huang J.C."/>
            <person name="Janbon G."/>
            <person name="Jones S.J.M."/>
            <person name="Koo H.L."/>
            <person name="Krzywinski M.I."/>
            <person name="Kwon-Chung K.J."/>
            <person name="Lengeler K.B."/>
            <person name="Maiti R."/>
            <person name="Marra M.A."/>
            <person name="Marra R.E."/>
            <person name="Mathewson C.A."/>
            <person name="Mitchell T.G."/>
            <person name="Pertea M."/>
            <person name="Riggs F.R."/>
            <person name="Salzberg S.L."/>
            <person name="Schein J.E."/>
            <person name="Shvartsbeyn A."/>
            <person name="Shin H."/>
            <person name="Shumway M."/>
            <person name="Specht C.A."/>
            <person name="Suh B.B."/>
            <person name="Tenney A."/>
            <person name="Utterback T.R."/>
            <person name="Wickes B.L."/>
            <person name="Wortman J.R."/>
            <person name="Wye N.H."/>
            <person name="Kronstad J.W."/>
            <person name="Lodge J.K."/>
            <person name="Heitman J."/>
            <person name="Davis R.W."/>
            <person name="Fraser C.M."/>
            <person name="Hyman R.W."/>
        </authorList>
    </citation>
    <scope>NUCLEOTIDE SEQUENCE [LARGE SCALE GENOMIC DNA]</scope>
    <source>
        <strain>B-3501A</strain>
    </source>
</reference>
<feature type="chain" id="PRO_0000410331" description="Histone acetyltransferase type B subunit 2">
    <location>
        <begin position="1"/>
        <end position="435"/>
    </location>
</feature>
<feature type="repeat" description="WD 1">
    <location>
        <begin position="135"/>
        <end position="175"/>
    </location>
</feature>
<feature type="repeat" description="WD 2">
    <location>
        <begin position="188"/>
        <end position="228"/>
    </location>
</feature>
<feature type="repeat" description="WD 3">
    <location>
        <begin position="238"/>
        <end position="278"/>
    </location>
</feature>
<feature type="repeat" description="WD 4">
    <location>
        <begin position="284"/>
        <end position="324"/>
    </location>
</feature>
<feature type="repeat" description="WD 5">
    <location>
        <begin position="328"/>
        <end position="368"/>
    </location>
</feature>
<feature type="repeat" description="WD 6">
    <location>
        <begin position="385"/>
        <end position="425"/>
    </location>
</feature>
<feature type="region of interest" description="Interaction with the histone H4 N-terminus" evidence="2">
    <location>
        <begin position="370"/>
        <end position="374"/>
    </location>
</feature>
<feature type="site" description="Important for interaction with HAT1" evidence="2">
    <location>
        <position position="301"/>
    </location>
</feature>
<keyword id="KW-0156">Chromatin regulator</keyword>
<keyword id="KW-0963">Cytoplasm</keyword>
<keyword id="KW-0539">Nucleus</keyword>
<keyword id="KW-0677">Repeat</keyword>
<keyword id="KW-0853">WD repeat</keyword>
<evidence type="ECO:0000250" key="1"/>
<evidence type="ECO:0000250" key="2">
    <source>
        <dbReference type="UniProtKB" id="P39984"/>
    </source>
</evidence>
<evidence type="ECO:0000305" key="3"/>
<comment type="function">
    <text evidence="2">Regulatory subunit of the histone acetylase B (HAT-B) complex. The complex acetylates 'Lys-12' of histone H4 which is required for telomeric silencing.</text>
</comment>
<comment type="subunit">
    <text evidence="2">Component of the HAT-B complex composed of at least HAT1 and HAT2. The HAT-B complex binds to histone H4 tail.</text>
</comment>
<comment type="subcellular location">
    <subcellularLocation>
        <location evidence="1">Cytoplasm</location>
    </subcellularLocation>
    <subcellularLocation>
        <location evidence="1">Nucleus</location>
    </subcellularLocation>
</comment>
<comment type="similarity">
    <text evidence="3">Belongs to the WD repeat RBAP46/RBAP48/MSI1 family.</text>
</comment>
<organism>
    <name type="scientific">Cryptococcus neoformans var. neoformans serotype D (strain B-3501A)</name>
    <name type="common">Filobasidiella neoformans</name>
    <dbReference type="NCBI Taxonomy" id="283643"/>
    <lineage>
        <taxon>Eukaryota</taxon>
        <taxon>Fungi</taxon>
        <taxon>Dikarya</taxon>
        <taxon>Basidiomycota</taxon>
        <taxon>Agaricomycotina</taxon>
        <taxon>Tremellomycetes</taxon>
        <taxon>Tremellales</taxon>
        <taxon>Cryptococcaceae</taxon>
        <taxon>Cryptococcus</taxon>
        <taxon>Cryptococcus neoformans species complex</taxon>
    </lineage>
</organism>
<proteinExistence type="inferred from homology"/>